<accession>Q3T003</accession>
<dbReference type="EMBL" id="BC102624">
    <property type="protein sequence ID" value="AAI02625.1"/>
    <property type="molecule type" value="mRNA"/>
</dbReference>
<dbReference type="RefSeq" id="NP_001028791.1">
    <property type="nucleotide sequence ID" value="NM_001033619.2"/>
</dbReference>
<dbReference type="PDB" id="6ZVK">
    <property type="method" value="EM"/>
    <property type="resolution" value="3.49 A"/>
    <property type="chains" value="62=2-176"/>
</dbReference>
<dbReference type="PDB" id="7A01">
    <property type="method" value="EM"/>
    <property type="resolution" value="3.60 A"/>
    <property type="chains" value="62=2-176"/>
</dbReference>
<dbReference type="PDBsum" id="6ZVK"/>
<dbReference type="PDBsum" id="7A01"/>
<dbReference type="EMDB" id="EMD-11459"/>
<dbReference type="EMDB" id="EMD-11590"/>
<dbReference type="SMR" id="Q3T003"/>
<dbReference type="FunCoup" id="Q3T003">
    <property type="interactions" value="2806"/>
</dbReference>
<dbReference type="STRING" id="9913.ENSBTAP00000021033"/>
<dbReference type="PaxDb" id="9913-ENSBTAP00000021033"/>
<dbReference type="PeptideAtlas" id="Q3T003"/>
<dbReference type="Ensembl" id="ENSBTAT00000124180.1">
    <property type="protein sequence ID" value="ENSBTAP00000082893.1"/>
    <property type="gene ID" value="ENSBTAG00000015831.4"/>
</dbReference>
<dbReference type="GeneID" id="404142"/>
<dbReference type="KEGG" id="bta:404142"/>
<dbReference type="CTD" id="6142"/>
<dbReference type="VEuPathDB" id="HostDB:ENSBTAG00000015831"/>
<dbReference type="VGNC" id="VGNC:34112">
    <property type="gene designation" value="RPL18A"/>
</dbReference>
<dbReference type="eggNOG" id="KOG0829">
    <property type="taxonomic scope" value="Eukaryota"/>
</dbReference>
<dbReference type="GeneTree" id="ENSGT00390000015797"/>
<dbReference type="HOGENOM" id="CLU_080773_2_0_1"/>
<dbReference type="InParanoid" id="Q3T003"/>
<dbReference type="OMA" id="CIFAKND"/>
<dbReference type="OrthoDB" id="1294322at2759"/>
<dbReference type="TreeFam" id="TF300086"/>
<dbReference type="Reactome" id="R-BTA-156827">
    <property type="pathway name" value="L13a-mediated translational silencing of Ceruloplasmin expression"/>
</dbReference>
<dbReference type="Reactome" id="R-BTA-1799339">
    <property type="pathway name" value="SRP-dependent cotranslational protein targeting to membrane"/>
</dbReference>
<dbReference type="Reactome" id="R-BTA-6791226">
    <property type="pathway name" value="Major pathway of rRNA processing in the nucleolus and cytosol"/>
</dbReference>
<dbReference type="Reactome" id="R-BTA-72689">
    <property type="pathway name" value="Formation of a pool of free 40S subunits"/>
</dbReference>
<dbReference type="Reactome" id="R-BTA-72706">
    <property type="pathway name" value="GTP hydrolysis and joining of the 60S ribosomal subunit"/>
</dbReference>
<dbReference type="Reactome" id="R-BTA-975956">
    <property type="pathway name" value="Nonsense Mediated Decay (NMD) independent of the Exon Junction Complex (EJC)"/>
</dbReference>
<dbReference type="Reactome" id="R-BTA-975957">
    <property type="pathway name" value="Nonsense Mediated Decay (NMD) enhanced by the Exon Junction Complex (EJC)"/>
</dbReference>
<dbReference type="CD-CODE" id="D7FE2080">
    <property type="entry name" value="Nucleolus"/>
</dbReference>
<dbReference type="Proteomes" id="UP000009136">
    <property type="component" value="Chromosome 7"/>
</dbReference>
<dbReference type="Bgee" id="ENSBTAG00000015831">
    <property type="expression patterns" value="Expressed in granulosa cell and 106 other cell types or tissues"/>
</dbReference>
<dbReference type="GO" id="GO:0022625">
    <property type="term" value="C:cytosolic large ribosomal subunit"/>
    <property type="evidence" value="ECO:0000318"/>
    <property type="project" value="GO_Central"/>
</dbReference>
<dbReference type="GO" id="GO:0003735">
    <property type="term" value="F:structural constituent of ribosome"/>
    <property type="evidence" value="ECO:0000318"/>
    <property type="project" value="GO_Central"/>
</dbReference>
<dbReference type="GO" id="GO:0002181">
    <property type="term" value="P:cytoplasmic translation"/>
    <property type="evidence" value="ECO:0000318"/>
    <property type="project" value="GO_Central"/>
</dbReference>
<dbReference type="FunFam" id="3.10.20.10:FF:000001">
    <property type="entry name" value="60S ribosomal protein L18a"/>
    <property type="match status" value="1"/>
</dbReference>
<dbReference type="FunFam" id="3.10.20.10:FF:000002">
    <property type="entry name" value="60S ribosomal protein L18a"/>
    <property type="match status" value="1"/>
</dbReference>
<dbReference type="Gene3D" id="3.10.20.10">
    <property type="match status" value="2"/>
</dbReference>
<dbReference type="HAMAP" id="MF_00273">
    <property type="entry name" value="Ribosomal_eL20"/>
    <property type="match status" value="1"/>
</dbReference>
<dbReference type="InterPro" id="IPR028877">
    <property type="entry name" value="Ribosomal_eL20"/>
</dbReference>
<dbReference type="InterPro" id="IPR023573">
    <property type="entry name" value="Ribosomal_eL20_dom"/>
</dbReference>
<dbReference type="InterPro" id="IPR021138">
    <property type="entry name" value="Ribosomal_eL20_eukaryotes"/>
</dbReference>
<dbReference type="PANTHER" id="PTHR10052">
    <property type="entry name" value="60S RIBOSOMAL PROTEIN L18A"/>
    <property type="match status" value="1"/>
</dbReference>
<dbReference type="Pfam" id="PF01775">
    <property type="entry name" value="Ribosomal_L18A"/>
    <property type="match status" value="1"/>
</dbReference>
<dbReference type="PIRSF" id="PIRSF002190">
    <property type="entry name" value="Ribosomal_L18a"/>
    <property type="match status" value="1"/>
</dbReference>
<dbReference type="SUPFAM" id="SSF160374">
    <property type="entry name" value="RplX-like"/>
    <property type="match status" value="1"/>
</dbReference>
<protein>
    <recommendedName>
        <fullName evidence="3">Large ribosomal subunit protein eL20</fullName>
    </recommendedName>
    <alternativeName>
        <fullName>60S ribosomal protein L18a</fullName>
    </alternativeName>
</protein>
<proteinExistence type="evidence at protein level"/>
<reference key="1">
    <citation type="submission" date="2005-08" db="EMBL/GenBank/DDBJ databases">
        <authorList>
            <consortium name="NIH - Mammalian Gene Collection (MGC) project"/>
        </authorList>
    </citation>
    <scope>NUCLEOTIDE SEQUENCE [LARGE SCALE MRNA]</scope>
    <source>
        <strain>Hereford</strain>
        <tissue>Testis</tissue>
    </source>
</reference>
<organism>
    <name type="scientific">Bos taurus</name>
    <name type="common">Bovine</name>
    <dbReference type="NCBI Taxonomy" id="9913"/>
    <lineage>
        <taxon>Eukaryota</taxon>
        <taxon>Metazoa</taxon>
        <taxon>Chordata</taxon>
        <taxon>Craniata</taxon>
        <taxon>Vertebrata</taxon>
        <taxon>Euteleostomi</taxon>
        <taxon>Mammalia</taxon>
        <taxon>Eutheria</taxon>
        <taxon>Laurasiatheria</taxon>
        <taxon>Artiodactyla</taxon>
        <taxon>Ruminantia</taxon>
        <taxon>Pecora</taxon>
        <taxon>Bovidae</taxon>
        <taxon>Bovinae</taxon>
        <taxon>Bos</taxon>
    </lineage>
</organism>
<gene>
    <name type="primary">RPL18A</name>
</gene>
<comment type="function">
    <text evidence="2">Component of the large ribosomal subunit. The ribosome is a large ribonucleoprotein complex responsible for the synthesis of proteins in the cell.</text>
</comment>
<comment type="subunit">
    <text evidence="2">Component of the large ribosomal subunit. Binds IPO9 with high affinity.</text>
</comment>
<comment type="subcellular location">
    <subcellularLocation>
        <location evidence="2">Cytoplasm</location>
    </subcellularLocation>
</comment>
<comment type="similarity">
    <text evidence="3">Belongs to the eukaryotic ribosomal protein eL20 family.</text>
</comment>
<feature type="chain" id="PRO_0000240140" description="Large ribosomal subunit protein eL20">
    <location>
        <begin position="1"/>
        <end position="176"/>
    </location>
</feature>
<feature type="modified residue" description="Phosphotyrosine" evidence="2">
    <location>
        <position position="63"/>
    </location>
</feature>
<feature type="modified residue" description="Phosphoserine" evidence="2">
    <location>
        <position position="71"/>
    </location>
</feature>
<feature type="modified residue" description="N6-succinyllysine" evidence="1">
    <location>
        <position position="76"/>
    </location>
</feature>
<feature type="modified residue" description="Phosphoserine" evidence="1">
    <location>
        <position position="123"/>
    </location>
</feature>
<feature type="cross-link" description="Glycyl lysine isopeptide (Lys-Gly) (interchain with G-Cter in SUMO2)" evidence="2">
    <location>
        <position position="11"/>
    </location>
</feature>
<feature type="cross-link" description="Glycyl lysine isopeptide (Lys-Gly) (interchain with G-Cter in SUMO2)" evidence="2">
    <location>
        <position position="128"/>
    </location>
</feature>
<feature type="cross-link" description="Glycyl lysine isopeptide (Lys-Gly) (interchain with G-Cter in SUMO2)" evidence="2">
    <location>
        <position position="170"/>
    </location>
</feature>
<evidence type="ECO:0000250" key="1">
    <source>
        <dbReference type="UniProtKB" id="P62717"/>
    </source>
</evidence>
<evidence type="ECO:0000250" key="2">
    <source>
        <dbReference type="UniProtKB" id="Q02543"/>
    </source>
</evidence>
<evidence type="ECO:0000305" key="3"/>
<keyword id="KW-0002">3D-structure</keyword>
<keyword id="KW-0963">Cytoplasm</keyword>
<keyword id="KW-1017">Isopeptide bond</keyword>
<keyword id="KW-0597">Phosphoprotein</keyword>
<keyword id="KW-1185">Reference proteome</keyword>
<keyword id="KW-0687">Ribonucleoprotein</keyword>
<keyword id="KW-0689">Ribosomal protein</keyword>
<keyword id="KW-0832">Ubl conjugation</keyword>
<name>RL18A_BOVIN</name>
<sequence length="176" mass="20762">MKASGTLREYKVVGRCLPTPKCHTPPLYRMRIFAPNHVVAKSRFWYFVSQLKKMKKSSGEIVYCGQVFEKSPLRVKNFGIWLRYDSRSGTHNMYREYRDLTTAGAVTQCYRDMGARHRARAHSIQIMKVEEIAASKCRRPAVKQFHDSKIKFPLPHRVLRRQHKPRFTTKRPNTFF</sequence>